<gene>
    <name evidence="1" type="primary">astE</name>
    <name type="ordered locus">Shewmr4_2029</name>
</gene>
<accession>Q0HIL5</accession>
<reference key="1">
    <citation type="submission" date="2006-08" db="EMBL/GenBank/DDBJ databases">
        <title>Complete sequence of Shewanella sp. MR-4.</title>
        <authorList>
            <consortium name="US DOE Joint Genome Institute"/>
            <person name="Copeland A."/>
            <person name="Lucas S."/>
            <person name="Lapidus A."/>
            <person name="Barry K."/>
            <person name="Detter J.C."/>
            <person name="Glavina del Rio T."/>
            <person name="Hammon N."/>
            <person name="Israni S."/>
            <person name="Dalin E."/>
            <person name="Tice H."/>
            <person name="Pitluck S."/>
            <person name="Kiss H."/>
            <person name="Brettin T."/>
            <person name="Bruce D."/>
            <person name="Han C."/>
            <person name="Tapia R."/>
            <person name="Gilna P."/>
            <person name="Schmutz J."/>
            <person name="Larimer F."/>
            <person name="Land M."/>
            <person name="Hauser L."/>
            <person name="Kyrpides N."/>
            <person name="Mikhailova N."/>
            <person name="Nealson K."/>
            <person name="Konstantinidis K."/>
            <person name="Klappenbach J."/>
            <person name="Tiedje J."/>
            <person name="Richardson P."/>
        </authorList>
    </citation>
    <scope>NUCLEOTIDE SEQUENCE [LARGE SCALE GENOMIC DNA]</scope>
    <source>
        <strain>MR-4</strain>
    </source>
</reference>
<feature type="chain" id="PRO_0000262082" description="Succinylglutamate desuccinylase">
    <location>
        <begin position="1"/>
        <end position="344"/>
    </location>
</feature>
<feature type="active site" evidence="1">
    <location>
        <position position="224"/>
    </location>
</feature>
<feature type="binding site" evidence="1">
    <location>
        <position position="63"/>
    </location>
    <ligand>
        <name>Zn(2+)</name>
        <dbReference type="ChEBI" id="CHEBI:29105"/>
    </ligand>
</feature>
<feature type="binding site" evidence="1">
    <location>
        <position position="66"/>
    </location>
    <ligand>
        <name>Zn(2+)</name>
        <dbReference type="ChEBI" id="CHEBI:29105"/>
    </ligand>
</feature>
<feature type="binding site" evidence="1">
    <location>
        <position position="160"/>
    </location>
    <ligand>
        <name>Zn(2+)</name>
        <dbReference type="ChEBI" id="CHEBI:29105"/>
    </ligand>
</feature>
<dbReference type="EC" id="3.5.1.96" evidence="1"/>
<dbReference type="EMBL" id="CP000446">
    <property type="protein sequence ID" value="ABI39102.1"/>
    <property type="molecule type" value="Genomic_DNA"/>
</dbReference>
<dbReference type="RefSeq" id="WP_011622793.1">
    <property type="nucleotide sequence ID" value="NC_008321.1"/>
</dbReference>
<dbReference type="SMR" id="Q0HIL5"/>
<dbReference type="KEGG" id="she:Shewmr4_2029"/>
<dbReference type="HOGENOM" id="CLU_071608_0_0_6"/>
<dbReference type="UniPathway" id="UPA00185">
    <property type="reaction ID" value="UER00283"/>
</dbReference>
<dbReference type="GO" id="GO:0016788">
    <property type="term" value="F:hydrolase activity, acting on ester bonds"/>
    <property type="evidence" value="ECO:0007669"/>
    <property type="project" value="UniProtKB-UniRule"/>
</dbReference>
<dbReference type="GO" id="GO:0009017">
    <property type="term" value="F:succinylglutamate desuccinylase activity"/>
    <property type="evidence" value="ECO:0007669"/>
    <property type="project" value="UniProtKB-EC"/>
</dbReference>
<dbReference type="GO" id="GO:0008270">
    <property type="term" value="F:zinc ion binding"/>
    <property type="evidence" value="ECO:0007669"/>
    <property type="project" value="UniProtKB-UniRule"/>
</dbReference>
<dbReference type="GO" id="GO:0019544">
    <property type="term" value="P:arginine catabolic process to glutamate"/>
    <property type="evidence" value="ECO:0007669"/>
    <property type="project" value="UniProtKB-UniRule"/>
</dbReference>
<dbReference type="GO" id="GO:0019545">
    <property type="term" value="P:arginine catabolic process to succinate"/>
    <property type="evidence" value="ECO:0007669"/>
    <property type="project" value="UniProtKB-UniRule"/>
</dbReference>
<dbReference type="CDD" id="cd03855">
    <property type="entry name" value="M14_ASTE"/>
    <property type="match status" value="1"/>
</dbReference>
<dbReference type="FunFam" id="3.40.630.10:FF:000172">
    <property type="entry name" value="Succinylglutamate desuccinylase"/>
    <property type="match status" value="1"/>
</dbReference>
<dbReference type="Gene3D" id="3.40.630.10">
    <property type="entry name" value="Zn peptidases"/>
    <property type="match status" value="1"/>
</dbReference>
<dbReference type="HAMAP" id="MF_00767">
    <property type="entry name" value="Arg_catab_AstE"/>
    <property type="match status" value="1"/>
</dbReference>
<dbReference type="InterPro" id="IPR050178">
    <property type="entry name" value="AspA/AstE_fam"/>
</dbReference>
<dbReference type="InterPro" id="IPR055438">
    <property type="entry name" value="AstE_AspA_cat"/>
</dbReference>
<dbReference type="InterPro" id="IPR007036">
    <property type="entry name" value="Aste_AspA_hybrid_dom"/>
</dbReference>
<dbReference type="InterPro" id="IPR016681">
    <property type="entry name" value="SuccinylGlu_desuccinylase"/>
</dbReference>
<dbReference type="NCBIfam" id="TIGR03242">
    <property type="entry name" value="arg_catab_astE"/>
    <property type="match status" value="1"/>
</dbReference>
<dbReference type="NCBIfam" id="NF003706">
    <property type="entry name" value="PRK05324.1"/>
    <property type="match status" value="1"/>
</dbReference>
<dbReference type="PANTHER" id="PTHR15162">
    <property type="entry name" value="ASPARTOACYLASE"/>
    <property type="match status" value="1"/>
</dbReference>
<dbReference type="PANTHER" id="PTHR15162:SF7">
    <property type="entry name" value="SUCCINYLGLUTAMATE DESUCCINYLASE"/>
    <property type="match status" value="1"/>
</dbReference>
<dbReference type="Pfam" id="PF24827">
    <property type="entry name" value="AstE_AspA_cat"/>
    <property type="match status" value="1"/>
</dbReference>
<dbReference type="Pfam" id="PF04952">
    <property type="entry name" value="AstE_AspA_hybrid"/>
    <property type="match status" value="1"/>
</dbReference>
<dbReference type="PIRSF" id="PIRSF017020">
    <property type="entry name" value="AstE"/>
    <property type="match status" value="1"/>
</dbReference>
<dbReference type="SUPFAM" id="SSF53187">
    <property type="entry name" value="Zn-dependent exopeptidases"/>
    <property type="match status" value="1"/>
</dbReference>
<evidence type="ECO:0000255" key="1">
    <source>
        <dbReference type="HAMAP-Rule" id="MF_00767"/>
    </source>
</evidence>
<organism>
    <name type="scientific">Shewanella sp. (strain MR-4)</name>
    <dbReference type="NCBI Taxonomy" id="60480"/>
    <lineage>
        <taxon>Bacteria</taxon>
        <taxon>Pseudomonadati</taxon>
        <taxon>Pseudomonadota</taxon>
        <taxon>Gammaproteobacteria</taxon>
        <taxon>Alteromonadales</taxon>
        <taxon>Shewanellaceae</taxon>
        <taxon>Shewanella</taxon>
    </lineage>
</organism>
<protein>
    <recommendedName>
        <fullName evidence="1">Succinylglutamate desuccinylase</fullName>
        <ecNumber evidence="1">3.5.1.96</ecNumber>
    </recommendedName>
</protein>
<sequence>MLQALLDSKDFLALTLANPETLGDEFSFTLGEHTRVEVWDTGVIVFEPVQAQGKDVILSCGVHGNETAPIELCNTLIKQLLQQKIIAKQRTLFLIGNPLAINNGTRIIDENMNRLFSGEHSNPPGLVNPERVRAKKLEAYVDRFFKGAAAGRQRIHYDLHTAMRASKHEKFAIYPYRPGRAYSAEQIMFLAASGVDTVLFHHEPTTTFSYFSSEQYGADAFTIELGKVYPMGQNDMTRFIAAQEMFMRLITDKPLALEPFSADKVNLYQVCRVINKHFDDFEFTFATDVENFRSFPKGFVLAREGGQEIKVEQECESIVFPNAKVPIGNRTVICLIPSVAPDVR</sequence>
<proteinExistence type="inferred from homology"/>
<keyword id="KW-0056">Arginine metabolism</keyword>
<keyword id="KW-0378">Hydrolase</keyword>
<keyword id="KW-0479">Metal-binding</keyword>
<keyword id="KW-0862">Zinc</keyword>
<comment type="function">
    <text evidence="1">Transforms N(2)-succinylglutamate into succinate and glutamate.</text>
</comment>
<comment type="catalytic activity">
    <reaction evidence="1">
        <text>N-succinyl-L-glutamate + H2O = L-glutamate + succinate</text>
        <dbReference type="Rhea" id="RHEA:15169"/>
        <dbReference type="ChEBI" id="CHEBI:15377"/>
        <dbReference type="ChEBI" id="CHEBI:29985"/>
        <dbReference type="ChEBI" id="CHEBI:30031"/>
        <dbReference type="ChEBI" id="CHEBI:58763"/>
        <dbReference type="EC" id="3.5.1.96"/>
    </reaction>
</comment>
<comment type="cofactor">
    <cofactor evidence="1">
        <name>Zn(2+)</name>
        <dbReference type="ChEBI" id="CHEBI:29105"/>
    </cofactor>
    <text evidence="1">Binds 1 zinc ion per subunit.</text>
</comment>
<comment type="pathway">
    <text evidence="1">Amino-acid degradation; L-arginine degradation via AST pathway; L-glutamate and succinate from L-arginine: step 5/5.</text>
</comment>
<comment type="similarity">
    <text evidence="1">Belongs to the AspA/AstE family. Succinylglutamate desuccinylase subfamily.</text>
</comment>
<name>ASTE_SHESM</name>